<proteinExistence type="evidence at transcript level"/>
<accession>Q9JM83</accession>
<accession>Q9CR31</accession>
<accession>Q9D1E9</accession>
<sequence>MSHGFTKEEVAEFQAAFNRFDKNKDGHISVEELGDVMKQLGKNLPEKDLKALISKLDTDGDGKISFEEFLTAIEKYKKGHRAGELRAVFNVLDQNGDGYITVDELKESLSKLGESLSQEELEDMIRVADVDQDGKVKYEEFVRLHVEN</sequence>
<name>CALM4_MOUSE</name>
<comment type="function">
    <text>Implicated in the early stage of ectopic ossification.</text>
</comment>
<feature type="chain" id="PRO_0000073856" description="Calmodulin-4">
    <location>
        <begin position="1"/>
        <end position="148"/>
    </location>
</feature>
<feature type="domain" description="EF-hand 1" evidence="1">
    <location>
        <begin position="8"/>
        <end position="43"/>
    </location>
</feature>
<feature type="domain" description="EF-hand 2" evidence="1">
    <location>
        <begin position="44"/>
        <end position="79"/>
    </location>
</feature>
<feature type="domain" description="EF-hand 3" evidence="1">
    <location>
        <begin position="80"/>
        <end position="115"/>
    </location>
</feature>
<feature type="domain" description="EF-hand 4" evidence="1">
    <location>
        <begin position="116"/>
        <end position="148"/>
    </location>
</feature>
<feature type="binding site" evidence="1">
    <location>
        <position position="21"/>
    </location>
    <ligand>
        <name>Ca(2+)</name>
        <dbReference type="ChEBI" id="CHEBI:29108"/>
        <label>1</label>
    </ligand>
</feature>
<feature type="binding site" evidence="1">
    <location>
        <position position="23"/>
    </location>
    <ligand>
        <name>Ca(2+)</name>
        <dbReference type="ChEBI" id="CHEBI:29108"/>
        <label>1</label>
    </ligand>
</feature>
<feature type="binding site" evidence="1">
    <location>
        <position position="25"/>
    </location>
    <ligand>
        <name>Ca(2+)</name>
        <dbReference type="ChEBI" id="CHEBI:29108"/>
        <label>1</label>
    </ligand>
</feature>
<feature type="binding site" evidence="1">
    <location>
        <position position="27"/>
    </location>
    <ligand>
        <name>Ca(2+)</name>
        <dbReference type="ChEBI" id="CHEBI:29108"/>
        <label>1</label>
    </ligand>
</feature>
<feature type="binding site" evidence="1">
    <location>
        <position position="32"/>
    </location>
    <ligand>
        <name>Ca(2+)</name>
        <dbReference type="ChEBI" id="CHEBI:29108"/>
        <label>1</label>
    </ligand>
</feature>
<feature type="binding site" evidence="1">
    <location>
        <position position="57"/>
    </location>
    <ligand>
        <name>Ca(2+)</name>
        <dbReference type="ChEBI" id="CHEBI:29108"/>
        <label>2</label>
    </ligand>
</feature>
<feature type="binding site" evidence="1">
    <location>
        <position position="59"/>
    </location>
    <ligand>
        <name>Ca(2+)</name>
        <dbReference type="ChEBI" id="CHEBI:29108"/>
        <label>2</label>
    </ligand>
</feature>
<feature type="binding site" evidence="1">
    <location>
        <position position="61"/>
    </location>
    <ligand>
        <name>Ca(2+)</name>
        <dbReference type="ChEBI" id="CHEBI:29108"/>
        <label>2</label>
    </ligand>
</feature>
<feature type="binding site" evidence="1">
    <location>
        <position position="63"/>
    </location>
    <ligand>
        <name>Ca(2+)</name>
        <dbReference type="ChEBI" id="CHEBI:29108"/>
        <label>2</label>
    </ligand>
</feature>
<feature type="binding site" evidence="1">
    <location>
        <position position="68"/>
    </location>
    <ligand>
        <name>Ca(2+)</name>
        <dbReference type="ChEBI" id="CHEBI:29108"/>
        <label>2</label>
    </ligand>
</feature>
<feature type="binding site" evidence="1">
    <location>
        <position position="93"/>
    </location>
    <ligand>
        <name>Ca(2+)</name>
        <dbReference type="ChEBI" id="CHEBI:29108"/>
        <label>3</label>
    </ligand>
</feature>
<feature type="binding site" evidence="1">
    <location>
        <position position="95"/>
    </location>
    <ligand>
        <name>Ca(2+)</name>
        <dbReference type="ChEBI" id="CHEBI:29108"/>
        <label>3</label>
    </ligand>
</feature>
<feature type="binding site" evidence="1">
    <location>
        <position position="97"/>
    </location>
    <ligand>
        <name>Ca(2+)</name>
        <dbReference type="ChEBI" id="CHEBI:29108"/>
        <label>3</label>
    </ligand>
</feature>
<feature type="binding site" evidence="1">
    <location>
        <position position="99"/>
    </location>
    <ligand>
        <name>Ca(2+)</name>
        <dbReference type="ChEBI" id="CHEBI:29108"/>
        <label>3</label>
    </ligand>
</feature>
<feature type="binding site" evidence="1">
    <location>
        <position position="104"/>
    </location>
    <ligand>
        <name>Ca(2+)</name>
        <dbReference type="ChEBI" id="CHEBI:29108"/>
        <label>3</label>
    </ligand>
</feature>
<feature type="sequence conflict" description="In Ref. 2; BAB22914." evidence="2" ref="2">
    <original>E</original>
    <variation>V</variation>
    <location>
        <position position="9"/>
    </location>
</feature>
<feature type="sequence conflict" description="In Ref. 2; BAB22914." evidence="2" ref="2">
    <original>M</original>
    <variation>V</variation>
    <location>
        <position position="124"/>
    </location>
</feature>
<feature type="sequence conflict" description="In Ref. 1; BAA95412." evidence="2" ref="1">
    <original>VEN</original>
    <variation>I</variation>
    <location>
        <begin position="146"/>
        <end position="148"/>
    </location>
</feature>
<evidence type="ECO:0000255" key="1">
    <source>
        <dbReference type="PROSITE-ProRule" id="PRU00448"/>
    </source>
</evidence>
<evidence type="ECO:0000305" key="2"/>
<gene>
    <name type="primary">Calm4</name>
    <name type="synonym">Dd112</name>
</gene>
<protein>
    <recommendedName>
        <fullName>Calmodulin-4</fullName>
    </recommendedName>
    <alternativeName>
        <fullName>Calcium-binding protein Dd112</fullName>
    </alternativeName>
</protein>
<keyword id="KW-0106">Calcium</keyword>
<keyword id="KW-0479">Metal-binding</keyword>
<keyword id="KW-1185">Reference proteome</keyword>
<keyword id="KW-0677">Repeat</keyword>
<reference key="1">
    <citation type="submission" date="2000-01" db="EMBL/GenBank/DDBJ databases">
        <title>DD112, a novel mouse gene implicated in the early stage of ectopic ossification.</title>
        <authorList>
            <person name="Ikegawa S."/>
            <person name="Nakamura Y."/>
        </authorList>
    </citation>
    <scope>NUCLEOTIDE SEQUENCE [GENOMIC DNA]</scope>
</reference>
<reference key="2">
    <citation type="journal article" date="2005" name="Science">
        <title>The transcriptional landscape of the mammalian genome.</title>
        <authorList>
            <person name="Carninci P."/>
            <person name="Kasukawa T."/>
            <person name="Katayama S."/>
            <person name="Gough J."/>
            <person name="Frith M.C."/>
            <person name="Maeda N."/>
            <person name="Oyama R."/>
            <person name="Ravasi T."/>
            <person name="Lenhard B."/>
            <person name="Wells C."/>
            <person name="Kodzius R."/>
            <person name="Shimokawa K."/>
            <person name="Bajic V.B."/>
            <person name="Brenner S.E."/>
            <person name="Batalov S."/>
            <person name="Forrest A.R."/>
            <person name="Zavolan M."/>
            <person name="Davis M.J."/>
            <person name="Wilming L.G."/>
            <person name="Aidinis V."/>
            <person name="Allen J.E."/>
            <person name="Ambesi-Impiombato A."/>
            <person name="Apweiler R."/>
            <person name="Aturaliya R.N."/>
            <person name="Bailey T.L."/>
            <person name="Bansal M."/>
            <person name="Baxter L."/>
            <person name="Beisel K.W."/>
            <person name="Bersano T."/>
            <person name="Bono H."/>
            <person name="Chalk A.M."/>
            <person name="Chiu K.P."/>
            <person name="Choudhary V."/>
            <person name="Christoffels A."/>
            <person name="Clutterbuck D.R."/>
            <person name="Crowe M.L."/>
            <person name="Dalla E."/>
            <person name="Dalrymple B.P."/>
            <person name="de Bono B."/>
            <person name="Della Gatta G."/>
            <person name="di Bernardo D."/>
            <person name="Down T."/>
            <person name="Engstrom P."/>
            <person name="Fagiolini M."/>
            <person name="Faulkner G."/>
            <person name="Fletcher C.F."/>
            <person name="Fukushima T."/>
            <person name="Furuno M."/>
            <person name="Futaki S."/>
            <person name="Gariboldi M."/>
            <person name="Georgii-Hemming P."/>
            <person name="Gingeras T.R."/>
            <person name="Gojobori T."/>
            <person name="Green R.E."/>
            <person name="Gustincich S."/>
            <person name="Harbers M."/>
            <person name="Hayashi Y."/>
            <person name="Hensch T.K."/>
            <person name="Hirokawa N."/>
            <person name="Hill D."/>
            <person name="Huminiecki L."/>
            <person name="Iacono M."/>
            <person name="Ikeo K."/>
            <person name="Iwama A."/>
            <person name="Ishikawa T."/>
            <person name="Jakt M."/>
            <person name="Kanapin A."/>
            <person name="Katoh M."/>
            <person name="Kawasawa Y."/>
            <person name="Kelso J."/>
            <person name="Kitamura H."/>
            <person name="Kitano H."/>
            <person name="Kollias G."/>
            <person name="Krishnan S.P."/>
            <person name="Kruger A."/>
            <person name="Kummerfeld S.K."/>
            <person name="Kurochkin I.V."/>
            <person name="Lareau L.F."/>
            <person name="Lazarevic D."/>
            <person name="Lipovich L."/>
            <person name="Liu J."/>
            <person name="Liuni S."/>
            <person name="McWilliam S."/>
            <person name="Madan Babu M."/>
            <person name="Madera M."/>
            <person name="Marchionni L."/>
            <person name="Matsuda H."/>
            <person name="Matsuzawa S."/>
            <person name="Miki H."/>
            <person name="Mignone F."/>
            <person name="Miyake S."/>
            <person name="Morris K."/>
            <person name="Mottagui-Tabar S."/>
            <person name="Mulder N."/>
            <person name="Nakano N."/>
            <person name="Nakauchi H."/>
            <person name="Ng P."/>
            <person name="Nilsson R."/>
            <person name="Nishiguchi S."/>
            <person name="Nishikawa S."/>
            <person name="Nori F."/>
            <person name="Ohara O."/>
            <person name="Okazaki Y."/>
            <person name="Orlando V."/>
            <person name="Pang K.C."/>
            <person name="Pavan W.J."/>
            <person name="Pavesi G."/>
            <person name="Pesole G."/>
            <person name="Petrovsky N."/>
            <person name="Piazza S."/>
            <person name="Reed J."/>
            <person name="Reid J.F."/>
            <person name="Ring B.Z."/>
            <person name="Ringwald M."/>
            <person name="Rost B."/>
            <person name="Ruan Y."/>
            <person name="Salzberg S.L."/>
            <person name="Sandelin A."/>
            <person name="Schneider C."/>
            <person name="Schoenbach C."/>
            <person name="Sekiguchi K."/>
            <person name="Semple C.A."/>
            <person name="Seno S."/>
            <person name="Sessa L."/>
            <person name="Sheng Y."/>
            <person name="Shibata Y."/>
            <person name="Shimada H."/>
            <person name="Shimada K."/>
            <person name="Silva D."/>
            <person name="Sinclair B."/>
            <person name="Sperling S."/>
            <person name="Stupka E."/>
            <person name="Sugiura K."/>
            <person name="Sultana R."/>
            <person name="Takenaka Y."/>
            <person name="Taki K."/>
            <person name="Tammoja K."/>
            <person name="Tan S.L."/>
            <person name="Tang S."/>
            <person name="Taylor M.S."/>
            <person name="Tegner J."/>
            <person name="Teichmann S.A."/>
            <person name="Ueda H.R."/>
            <person name="van Nimwegen E."/>
            <person name="Verardo R."/>
            <person name="Wei C.L."/>
            <person name="Yagi K."/>
            <person name="Yamanishi H."/>
            <person name="Zabarovsky E."/>
            <person name="Zhu S."/>
            <person name="Zimmer A."/>
            <person name="Hide W."/>
            <person name="Bult C."/>
            <person name="Grimmond S.M."/>
            <person name="Teasdale R.D."/>
            <person name="Liu E.T."/>
            <person name="Brusic V."/>
            <person name="Quackenbush J."/>
            <person name="Wahlestedt C."/>
            <person name="Mattick J.S."/>
            <person name="Hume D.A."/>
            <person name="Kai C."/>
            <person name="Sasaki D."/>
            <person name="Tomaru Y."/>
            <person name="Fukuda S."/>
            <person name="Kanamori-Katayama M."/>
            <person name="Suzuki M."/>
            <person name="Aoki J."/>
            <person name="Arakawa T."/>
            <person name="Iida J."/>
            <person name="Imamura K."/>
            <person name="Itoh M."/>
            <person name="Kato T."/>
            <person name="Kawaji H."/>
            <person name="Kawagashira N."/>
            <person name="Kawashima T."/>
            <person name="Kojima M."/>
            <person name="Kondo S."/>
            <person name="Konno H."/>
            <person name="Nakano K."/>
            <person name="Ninomiya N."/>
            <person name="Nishio T."/>
            <person name="Okada M."/>
            <person name="Plessy C."/>
            <person name="Shibata K."/>
            <person name="Shiraki T."/>
            <person name="Suzuki S."/>
            <person name="Tagami M."/>
            <person name="Waki K."/>
            <person name="Watahiki A."/>
            <person name="Okamura-Oho Y."/>
            <person name="Suzuki H."/>
            <person name="Kawai J."/>
            <person name="Hayashizaki Y."/>
        </authorList>
    </citation>
    <scope>NUCLEOTIDE SEQUENCE [LARGE SCALE MRNA]</scope>
    <source>
        <strain>C57BL/6J</strain>
        <tissue>Tongue</tissue>
    </source>
</reference>
<organism>
    <name type="scientific">Mus musculus</name>
    <name type="common">Mouse</name>
    <dbReference type="NCBI Taxonomy" id="10090"/>
    <lineage>
        <taxon>Eukaryota</taxon>
        <taxon>Metazoa</taxon>
        <taxon>Chordata</taxon>
        <taxon>Craniata</taxon>
        <taxon>Vertebrata</taxon>
        <taxon>Euteleostomi</taxon>
        <taxon>Mammalia</taxon>
        <taxon>Eutheria</taxon>
        <taxon>Euarchontoglires</taxon>
        <taxon>Glires</taxon>
        <taxon>Rodentia</taxon>
        <taxon>Myomorpha</taxon>
        <taxon>Muroidea</taxon>
        <taxon>Muridae</taxon>
        <taxon>Murinae</taxon>
        <taxon>Mus</taxon>
        <taxon>Mus</taxon>
    </lineage>
</organism>
<dbReference type="EMBL" id="AB036744">
    <property type="protein sequence ID" value="BAA95412.1"/>
    <property type="molecule type" value="Genomic_DNA"/>
</dbReference>
<dbReference type="EMBL" id="AK009956">
    <property type="protein sequence ID" value="BAB26608.1"/>
    <property type="molecule type" value="mRNA"/>
</dbReference>
<dbReference type="EMBL" id="AK009664">
    <property type="protein sequence ID" value="BAB26425.1"/>
    <property type="molecule type" value="mRNA"/>
</dbReference>
<dbReference type="EMBL" id="AK003648">
    <property type="protein sequence ID" value="BAB22914.1"/>
    <property type="molecule type" value="mRNA"/>
</dbReference>
<dbReference type="CCDS" id="CCDS26215.1"/>
<dbReference type="RefSeq" id="NP_064420.2">
    <property type="nucleotide sequence ID" value="NM_020036.4"/>
</dbReference>
<dbReference type="SMR" id="Q9JM83"/>
<dbReference type="FunCoup" id="Q9JM83">
    <property type="interactions" value="2039"/>
</dbReference>
<dbReference type="STRING" id="10090.ENSMUSP00000041636"/>
<dbReference type="iPTMnet" id="Q9JM83"/>
<dbReference type="PhosphoSitePlus" id="Q9JM83"/>
<dbReference type="PaxDb" id="10090-ENSMUSP00000041636"/>
<dbReference type="ProteomicsDB" id="273830"/>
<dbReference type="DNASU" id="80796"/>
<dbReference type="Ensembl" id="ENSMUST00000042219.6">
    <property type="protein sequence ID" value="ENSMUSP00000041636.5"/>
    <property type="gene ID" value="ENSMUSG00000033765.6"/>
</dbReference>
<dbReference type="GeneID" id="80796"/>
<dbReference type="KEGG" id="mmu:80796"/>
<dbReference type="UCSC" id="uc007pjb.1">
    <property type="organism name" value="mouse"/>
</dbReference>
<dbReference type="AGR" id="MGI:1931464"/>
<dbReference type="CTD" id="80796"/>
<dbReference type="MGI" id="MGI:1931464">
    <property type="gene designation" value="Calm4"/>
</dbReference>
<dbReference type="VEuPathDB" id="HostDB:ENSMUSG00000033765"/>
<dbReference type="eggNOG" id="KOG0027">
    <property type="taxonomic scope" value="Eukaryota"/>
</dbReference>
<dbReference type="GeneTree" id="ENSGT00940000163406"/>
<dbReference type="HOGENOM" id="CLU_061288_2_1_1"/>
<dbReference type="InParanoid" id="Q9JM83"/>
<dbReference type="OMA" id="VKRMKSW"/>
<dbReference type="OrthoDB" id="26525at2759"/>
<dbReference type="PhylomeDB" id="Q9JM83"/>
<dbReference type="TreeFam" id="TF339519"/>
<dbReference type="Reactome" id="R-MMU-6798695">
    <property type="pathway name" value="Neutrophil degranulation"/>
</dbReference>
<dbReference type="BioGRID-ORCS" id="80796">
    <property type="hits" value="1 hit in 79 CRISPR screens"/>
</dbReference>
<dbReference type="PRO" id="PR:Q9JM83"/>
<dbReference type="Proteomes" id="UP000000589">
    <property type="component" value="Chromosome 13"/>
</dbReference>
<dbReference type="RNAct" id="Q9JM83">
    <property type="molecule type" value="protein"/>
</dbReference>
<dbReference type="Bgee" id="ENSMUSG00000033765">
    <property type="expression patterns" value="Expressed in lip and 54 other cell types or tissues"/>
</dbReference>
<dbReference type="GO" id="GO:0005509">
    <property type="term" value="F:calcium ion binding"/>
    <property type="evidence" value="ECO:0000314"/>
    <property type="project" value="MGI"/>
</dbReference>
<dbReference type="GO" id="GO:1990830">
    <property type="term" value="P:cellular response to leukemia inhibitory factor"/>
    <property type="evidence" value="ECO:0000270"/>
    <property type="project" value="MGI"/>
</dbReference>
<dbReference type="CDD" id="cd00051">
    <property type="entry name" value="EFh"/>
    <property type="match status" value="2"/>
</dbReference>
<dbReference type="FunFam" id="1.10.238.10:FF:000181">
    <property type="entry name" value="CALML5 isoform 1"/>
    <property type="match status" value="1"/>
</dbReference>
<dbReference type="FunFam" id="1.10.238.10:FF:000251">
    <property type="entry name" value="Calmodulin-related protein 97A"/>
    <property type="match status" value="1"/>
</dbReference>
<dbReference type="Gene3D" id="1.10.238.10">
    <property type="entry name" value="EF-hand"/>
    <property type="match status" value="2"/>
</dbReference>
<dbReference type="InterPro" id="IPR050230">
    <property type="entry name" value="CALM/Myosin/TropC-like"/>
</dbReference>
<dbReference type="InterPro" id="IPR011992">
    <property type="entry name" value="EF-hand-dom_pair"/>
</dbReference>
<dbReference type="InterPro" id="IPR018247">
    <property type="entry name" value="EF_Hand_1_Ca_BS"/>
</dbReference>
<dbReference type="InterPro" id="IPR002048">
    <property type="entry name" value="EF_hand_dom"/>
</dbReference>
<dbReference type="PANTHER" id="PTHR23048:SF59">
    <property type="entry name" value="EF-HAND SUPERFAMILY PROTEIN"/>
    <property type="match status" value="1"/>
</dbReference>
<dbReference type="PANTHER" id="PTHR23048">
    <property type="entry name" value="MYOSIN LIGHT CHAIN 1, 3"/>
    <property type="match status" value="1"/>
</dbReference>
<dbReference type="Pfam" id="PF13499">
    <property type="entry name" value="EF-hand_7"/>
    <property type="match status" value="2"/>
</dbReference>
<dbReference type="SMART" id="SM00054">
    <property type="entry name" value="EFh"/>
    <property type="match status" value="4"/>
</dbReference>
<dbReference type="SUPFAM" id="SSF47473">
    <property type="entry name" value="EF-hand"/>
    <property type="match status" value="1"/>
</dbReference>
<dbReference type="PROSITE" id="PS00018">
    <property type="entry name" value="EF_HAND_1"/>
    <property type="match status" value="3"/>
</dbReference>
<dbReference type="PROSITE" id="PS50222">
    <property type="entry name" value="EF_HAND_2"/>
    <property type="match status" value="4"/>
</dbReference>